<organism>
    <name type="scientific">Staphylococcus epidermidis (strain ATCC 12228 / FDA PCI 1200)</name>
    <dbReference type="NCBI Taxonomy" id="176280"/>
    <lineage>
        <taxon>Bacteria</taxon>
        <taxon>Bacillati</taxon>
        <taxon>Bacillota</taxon>
        <taxon>Bacilli</taxon>
        <taxon>Bacillales</taxon>
        <taxon>Staphylococcaceae</taxon>
        <taxon>Staphylococcus</taxon>
    </lineage>
</organism>
<sequence>MNVGIKGFGAYAPKNIIDNAYFEQFLETSDEWISKMTGIKERHWADEDQDTSDLAYNASIKAIEDAGIQPVDIDMIIVATATGDMPFPSVANILQERLGTGKVATMDQLAACSGFMYSMITAKQYIQSGDYKHILVVGADKLSKITDMTDRSTAVLFGDGAGAVVMGEVAEGRGIISYEMGSDGSGGKYLYLDRETGKLKMNGREVFKFAVRIMGDASTRVVEKAGLSSEDIDLFVPHQANIRIMESARERLGIEREKMSVSVNKYGNTSAASIPLSINQELQNGKIKDDDTLVLVGFGGGLTWGAIVIKWGK</sequence>
<gene>
    <name evidence="1" type="primary">fabH1</name>
    <name type="ordered locus">SE_0677</name>
</gene>
<name>FABH1_STAES</name>
<keyword id="KW-0012">Acyltransferase</keyword>
<keyword id="KW-0963">Cytoplasm</keyword>
<keyword id="KW-0275">Fatty acid biosynthesis</keyword>
<keyword id="KW-0276">Fatty acid metabolism</keyword>
<keyword id="KW-0444">Lipid biosynthesis</keyword>
<keyword id="KW-0443">Lipid metabolism</keyword>
<keyword id="KW-0511">Multifunctional enzyme</keyword>
<keyword id="KW-0808">Transferase</keyword>
<feature type="chain" id="PRO_0000110474" description="Beta-ketoacyl-[acyl-carrier-protein] synthase III 1">
    <location>
        <begin position="1"/>
        <end position="313"/>
    </location>
</feature>
<feature type="region of interest" description="ACP-binding" evidence="1">
    <location>
        <begin position="239"/>
        <end position="243"/>
    </location>
</feature>
<feature type="active site" evidence="1">
    <location>
        <position position="112"/>
    </location>
</feature>
<feature type="active site" evidence="1">
    <location>
        <position position="238"/>
    </location>
</feature>
<feature type="active site" evidence="1">
    <location>
        <position position="268"/>
    </location>
</feature>
<comment type="function">
    <text evidence="1">Catalyzes the condensation reaction of fatty acid synthesis by the addition to an acyl acceptor of two carbons from malonyl-ACP. Catalyzes the first condensation reaction which initiates fatty acid synthesis and may therefore play a role in governing the total rate of fatty acid production. Possesses both acetoacetyl-ACP synthase and acetyl transacylase activities. Its substrate specificity determines the biosynthesis of branched-chain and/or straight-chain of fatty acids.</text>
</comment>
<comment type="catalytic activity">
    <reaction evidence="1">
        <text>malonyl-[ACP] + acetyl-CoA + H(+) = 3-oxobutanoyl-[ACP] + CO2 + CoA</text>
        <dbReference type="Rhea" id="RHEA:12080"/>
        <dbReference type="Rhea" id="RHEA-COMP:9623"/>
        <dbReference type="Rhea" id="RHEA-COMP:9625"/>
        <dbReference type="ChEBI" id="CHEBI:15378"/>
        <dbReference type="ChEBI" id="CHEBI:16526"/>
        <dbReference type="ChEBI" id="CHEBI:57287"/>
        <dbReference type="ChEBI" id="CHEBI:57288"/>
        <dbReference type="ChEBI" id="CHEBI:78449"/>
        <dbReference type="ChEBI" id="CHEBI:78450"/>
        <dbReference type="EC" id="2.3.1.180"/>
    </reaction>
</comment>
<comment type="pathway">
    <text evidence="1">Lipid metabolism; fatty acid biosynthesis.</text>
</comment>
<comment type="subunit">
    <text evidence="1">Homodimer.</text>
</comment>
<comment type="subcellular location">
    <subcellularLocation>
        <location evidence="1">Cytoplasm</location>
    </subcellularLocation>
</comment>
<comment type="domain">
    <text evidence="1">The last Arg residue of the ACP-binding site is essential for the weak association between ACP/AcpP and FabH.</text>
</comment>
<comment type="similarity">
    <text evidence="1">Belongs to the thiolase-like superfamily. FabH family.</text>
</comment>
<dbReference type="EC" id="2.3.1.180" evidence="1"/>
<dbReference type="EMBL" id="AE015929">
    <property type="protein sequence ID" value="AAO04274.1"/>
    <property type="molecule type" value="Genomic_DNA"/>
</dbReference>
<dbReference type="RefSeq" id="NP_764232.1">
    <property type="nucleotide sequence ID" value="NC_004461.1"/>
</dbReference>
<dbReference type="RefSeq" id="WP_001829261.1">
    <property type="nucleotide sequence ID" value="NZ_WBME01000066.1"/>
</dbReference>
<dbReference type="SMR" id="Q8CPT4"/>
<dbReference type="KEGG" id="sep:SE_0677"/>
<dbReference type="PATRIC" id="fig|176280.10.peg.651"/>
<dbReference type="eggNOG" id="COG0332">
    <property type="taxonomic scope" value="Bacteria"/>
</dbReference>
<dbReference type="HOGENOM" id="CLU_039592_3_1_9"/>
<dbReference type="OrthoDB" id="9815506at2"/>
<dbReference type="UniPathway" id="UPA00094"/>
<dbReference type="Proteomes" id="UP000001411">
    <property type="component" value="Chromosome"/>
</dbReference>
<dbReference type="GO" id="GO:0005737">
    <property type="term" value="C:cytoplasm"/>
    <property type="evidence" value="ECO:0007669"/>
    <property type="project" value="UniProtKB-SubCell"/>
</dbReference>
<dbReference type="GO" id="GO:0004315">
    <property type="term" value="F:3-oxoacyl-[acyl-carrier-protein] synthase activity"/>
    <property type="evidence" value="ECO:0007669"/>
    <property type="project" value="InterPro"/>
</dbReference>
<dbReference type="GO" id="GO:0033818">
    <property type="term" value="F:beta-ketoacyl-acyl-carrier-protein synthase III activity"/>
    <property type="evidence" value="ECO:0007669"/>
    <property type="project" value="UniProtKB-UniRule"/>
</dbReference>
<dbReference type="GO" id="GO:0006633">
    <property type="term" value="P:fatty acid biosynthetic process"/>
    <property type="evidence" value="ECO:0007669"/>
    <property type="project" value="UniProtKB-UniRule"/>
</dbReference>
<dbReference type="CDD" id="cd00830">
    <property type="entry name" value="KAS_III"/>
    <property type="match status" value="1"/>
</dbReference>
<dbReference type="FunFam" id="3.40.47.10:FF:000004">
    <property type="entry name" value="3-oxoacyl-[acyl-carrier-protein] synthase 3"/>
    <property type="match status" value="1"/>
</dbReference>
<dbReference type="Gene3D" id="3.40.47.10">
    <property type="match status" value="1"/>
</dbReference>
<dbReference type="HAMAP" id="MF_01815">
    <property type="entry name" value="FabH"/>
    <property type="match status" value="1"/>
</dbReference>
<dbReference type="InterPro" id="IPR013747">
    <property type="entry name" value="ACP_syn_III_C"/>
</dbReference>
<dbReference type="InterPro" id="IPR013751">
    <property type="entry name" value="ACP_syn_III_N"/>
</dbReference>
<dbReference type="InterPro" id="IPR004655">
    <property type="entry name" value="FabH"/>
</dbReference>
<dbReference type="InterPro" id="IPR016039">
    <property type="entry name" value="Thiolase-like"/>
</dbReference>
<dbReference type="NCBIfam" id="TIGR00747">
    <property type="entry name" value="fabH"/>
    <property type="match status" value="1"/>
</dbReference>
<dbReference type="NCBIfam" id="NF006829">
    <property type="entry name" value="PRK09352.1"/>
    <property type="match status" value="1"/>
</dbReference>
<dbReference type="PANTHER" id="PTHR43091">
    <property type="entry name" value="3-OXOACYL-[ACYL-CARRIER-PROTEIN] SYNTHASE"/>
    <property type="match status" value="1"/>
</dbReference>
<dbReference type="PANTHER" id="PTHR43091:SF1">
    <property type="entry name" value="BETA-KETOACYL-[ACYL-CARRIER-PROTEIN] SYNTHASE III, CHLOROPLASTIC"/>
    <property type="match status" value="1"/>
</dbReference>
<dbReference type="Pfam" id="PF08545">
    <property type="entry name" value="ACP_syn_III"/>
    <property type="match status" value="1"/>
</dbReference>
<dbReference type="Pfam" id="PF08541">
    <property type="entry name" value="ACP_syn_III_C"/>
    <property type="match status" value="1"/>
</dbReference>
<dbReference type="SUPFAM" id="SSF53901">
    <property type="entry name" value="Thiolase-like"/>
    <property type="match status" value="1"/>
</dbReference>
<evidence type="ECO:0000255" key="1">
    <source>
        <dbReference type="HAMAP-Rule" id="MF_01815"/>
    </source>
</evidence>
<accession>Q8CPT4</accession>
<protein>
    <recommendedName>
        <fullName evidence="1">Beta-ketoacyl-[acyl-carrier-protein] synthase III 1</fullName>
        <shortName evidence="1">Beta-ketoacyl-ACP synthase III 1</shortName>
        <shortName evidence="1">KAS III 1</shortName>
        <ecNumber evidence="1">2.3.1.180</ecNumber>
    </recommendedName>
    <alternativeName>
        <fullName evidence="1">3-oxoacyl-[acyl-carrier-protein] synthase 3 1</fullName>
    </alternativeName>
    <alternativeName>
        <fullName evidence="1">3-oxoacyl-[acyl-carrier-protein] synthase III 1</fullName>
    </alternativeName>
</protein>
<proteinExistence type="inferred from homology"/>
<reference key="1">
    <citation type="journal article" date="2003" name="Mol. Microbiol.">
        <title>Genome-based analysis of virulence genes in a non-biofilm-forming Staphylococcus epidermidis strain (ATCC 12228).</title>
        <authorList>
            <person name="Zhang Y.-Q."/>
            <person name="Ren S.-X."/>
            <person name="Li H.-L."/>
            <person name="Wang Y.-X."/>
            <person name="Fu G."/>
            <person name="Yang J."/>
            <person name="Qin Z.-Q."/>
            <person name="Miao Y.-G."/>
            <person name="Wang W.-Y."/>
            <person name="Chen R.-S."/>
            <person name="Shen Y."/>
            <person name="Chen Z."/>
            <person name="Yuan Z.-H."/>
            <person name="Zhao G.-P."/>
            <person name="Qu D."/>
            <person name="Danchin A."/>
            <person name="Wen Y.-M."/>
        </authorList>
    </citation>
    <scope>NUCLEOTIDE SEQUENCE [LARGE SCALE GENOMIC DNA]</scope>
    <source>
        <strain>ATCC 12228 / FDA PCI 1200</strain>
    </source>
</reference>